<feature type="chain" id="PRO_1000128083" description="Small ribosomal subunit protein uS9">
    <location>
        <begin position="1"/>
        <end position="159"/>
    </location>
</feature>
<name>RS9_BEII9</name>
<accession>B2IK87</accession>
<protein>
    <recommendedName>
        <fullName evidence="1">Small ribosomal subunit protein uS9</fullName>
    </recommendedName>
    <alternativeName>
        <fullName evidence="2">30S ribosomal protein S9</fullName>
    </alternativeName>
</protein>
<organism>
    <name type="scientific">Beijerinckia indica subsp. indica (strain ATCC 9039 / DSM 1715 / NCIMB 8712)</name>
    <dbReference type="NCBI Taxonomy" id="395963"/>
    <lineage>
        <taxon>Bacteria</taxon>
        <taxon>Pseudomonadati</taxon>
        <taxon>Pseudomonadota</taxon>
        <taxon>Alphaproteobacteria</taxon>
        <taxon>Hyphomicrobiales</taxon>
        <taxon>Beijerinckiaceae</taxon>
        <taxon>Beijerinckia</taxon>
    </lineage>
</organism>
<reference key="1">
    <citation type="journal article" date="2010" name="J. Bacteriol.">
        <title>Complete genome sequence of Beijerinckia indica subsp. indica.</title>
        <authorList>
            <person name="Tamas I."/>
            <person name="Dedysh S.N."/>
            <person name="Liesack W."/>
            <person name="Stott M.B."/>
            <person name="Alam M."/>
            <person name="Murrell J.C."/>
            <person name="Dunfield P.F."/>
        </authorList>
    </citation>
    <scope>NUCLEOTIDE SEQUENCE [LARGE SCALE GENOMIC DNA]</scope>
    <source>
        <strain>ATCC 9039 / DSM 1715 / NCIMB 8712</strain>
    </source>
</reference>
<gene>
    <name evidence="1" type="primary">rpsI</name>
    <name type="ordered locus">Bind_1379</name>
</gene>
<keyword id="KW-1185">Reference proteome</keyword>
<keyword id="KW-0687">Ribonucleoprotein</keyword>
<keyword id="KW-0689">Ribosomal protein</keyword>
<comment type="similarity">
    <text evidence="1">Belongs to the universal ribosomal protein uS9 family.</text>
</comment>
<evidence type="ECO:0000255" key="1">
    <source>
        <dbReference type="HAMAP-Rule" id="MF_00532"/>
    </source>
</evidence>
<evidence type="ECO:0000305" key="2"/>
<sequence>MAETLSSLQDLKAATAVPTEEAPVYAQKLDAFGRAYATGKRKDAVARVWIKPGSGKVTVNGRPLDVYFARPVLRMILQQPLGVAKRVDQYDLMVTVAGGGLSGQAGAVRHGLAKALVNYEPELRSALKKEGFLTRDSRTVERKKYGKKKARRSFQFSKR</sequence>
<dbReference type="EMBL" id="CP001016">
    <property type="protein sequence ID" value="ACB95019.1"/>
    <property type="molecule type" value="Genomic_DNA"/>
</dbReference>
<dbReference type="RefSeq" id="WP_012384376.1">
    <property type="nucleotide sequence ID" value="NC_010581.1"/>
</dbReference>
<dbReference type="SMR" id="B2IK87"/>
<dbReference type="STRING" id="395963.Bind_1379"/>
<dbReference type="KEGG" id="bid:Bind_1379"/>
<dbReference type="eggNOG" id="COG0103">
    <property type="taxonomic scope" value="Bacteria"/>
</dbReference>
<dbReference type="HOGENOM" id="CLU_046483_2_0_5"/>
<dbReference type="OrthoDB" id="9803965at2"/>
<dbReference type="Proteomes" id="UP000001695">
    <property type="component" value="Chromosome"/>
</dbReference>
<dbReference type="GO" id="GO:0022627">
    <property type="term" value="C:cytosolic small ribosomal subunit"/>
    <property type="evidence" value="ECO:0007669"/>
    <property type="project" value="TreeGrafter"/>
</dbReference>
<dbReference type="GO" id="GO:0003723">
    <property type="term" value="F:RNA binding"/>
    <property type="evidence" value="ECO:0007669"/>
    <property type="project" value="TreeGrafter"/>
</dbReference>
<dbReference type="GO" id="GO:0003735">
    <property type="term" value="F:structural constituent of ribosome"/>
    <property type="evidence" value="ECO:0007669"/>
    <property type="project" value="InterPro"/>
</dbReference>
<dbReference type="GO" id="GO:0006412">
    <property type="term" value="P:translation"/>
    <property type="evidence" value="ECO:0007669"/>
    <property type="project" value="UniProtKB-UniRule"/>
</dbReference>
<dbReference type="FunFam" id="3.30.230.10:FF:000001">
    <property type="entry name" value="30S ribosomal protein S9"/>
    <property type="match status" value="1"/>
</dbReference>
<dbReference type="Gene3D" id="3.30.230.10">
    <property type="match status" value="1"/>
</dbReference>
<dbReference type="HAMAP" id="MF_00532_B">
    <property type="entry name" value="Ribosomal_uS9_B"/>
    <property type="match status" value="1"/>
</dbReference>
<dbReference type="InterPro" id="IPR020568">
    <property type="entry name" value="Ribosomal_Su5_D2-typ_SF"/>
</dbReference>
<dbReference type="InterPro" id="IPR000754">
    <property type="entry name" value="Ribosomal_uS9"/>
</dbReference>
<dbReference type="InterPro" id="IPR023035">
    <property type="entry name" value="Ribosomal_uS9_bac/plastid"/>
</dbReference>
<dbReference type="InterPro" id="IPR020574">
    <property type="entry name" value="Ribosomal_uS9_CS"/>
</dbReference>
<dbReference type="InterPro" id="IPR014721">
    <property type="entry name" value="Ribsml_uS5_D2-typ_fold_subgr"/>
</dbReference>
<dbReference type="NCBIfam" id="NF001099">
    <property type="entry name" value="PRK00132.1"/>
    <property type="match status" value="1"/>
</dbReference>
<dbReference type="PANTHER" id="PTHR21569">
    <property type="entry name" value="RIBOSOMAL PROTEIN S9"/>
    <property type="match status" value="1"/>
</dbReference>
<dbReference type="PANTHER" id="PTHR21569:SF1">
    <property type="entry name" value="SMALL RIBOSOMAL SUBUNIT PROTEIN US9M"/>
    <property type="match status" value="1"/>
</dbReference>
<dbReference type="Pfam" id="PF00380">
    <property type="entry name" value="Ribosomal_S9"/>
    <property type="match status" value="1"/>
</dbReference>
<dbReference type="SUPFAM" id="SSF54211">
    <property type="entry name" value="Ribosomal protein S5 domain 2-like"/>
    <property type="match status" value="1"/>
</dbReference>
<dbReference type="PROSITE" id="PS00360">
    <property type="entry name" value="RIBOSOMAL_S9"/>
    <property type="match status" value="1"/>
</dbReference>
<proteinExistence type="inferred from homology"/>